<proteinExistence type="evidence at protein level"/>
<reference key="1">
    <citation type="submission" date="1994-04" db="EMBL/GenBank/DDBJ databases">
        <authorList>
            <person name="Trevanion S.J."/>
            <person name="Ashton A.R."/>
        </authorList>
    </citation>
    <scope>NUCLEOTIDE SEQUENCE [MRNA]</scope>
    <source>
        <tissue>Leaf</tissue>
    </source>
</reference>
<reference key="2">
    <citation type="journal article" date="1998" name="Acta Crystallogr. D">
        <title>Crystallization and preliminary crystallographic studies of chloroplast NADP-dependent malate dehydrogenase from Flaveria bidentis.</title>
        <authorList>
            <person name="Macpherson K.H."/>
            <person name="Ashton A.R."/>
            <person name="Carr P.D."/>
            <person name="Trevanion S.J."/>
            <person name="Verger D."/>
            <person name="Ollis D.L."/>
        </authorList>
    </citation>
    <scope>CRYSTALLIZATION</scope>
</reference>
<reference key="3">
    <citation type="journal article" date="1999" name="Structure">
        <title>Chloroplast NADP-malate dehydrogenase: structural basis of light-dependent regulation of activity by thiol oxidation and reduction.</title>
        <authorList>
            <person name="Carr P.D."/>
            <person name="Verger D."/>
            <person name="Ashton A.R."/>
            <person name="Ollis D.L."/>
        </authorList>
    </citation>
    <scope>X-RAY CRYSTALLOGRAPHY (2.8 ANGSTROMS) IN COMPLEX WITH NADP</scope>
    <scope>SUBUNIT</scope>
    <source>
        <tissue>Leaf</tissue>
    </source>
</reference>
<keyword id="KW-0002">3D-structure</keyword>
<keyword id="KW-0150">Chloroplast</keyword>
<keyword id="KW-1015">Disulfide bond</keyword>
<keyword id="KW-0521">NADP</keyword>
<keyword id="KW-0560">Oxidoreductase</keyword>
<keyword id="KW-0934">Plastid</keyword>
<keyword id="KW-0809">Transit peptide</keyword>
<accession>P46489</accession>
<comment type="function">
    <text>The chloroplastic, NADP-dependent form is essential for the photosynthesis C4 cycle, which allows plants to circumvent the problem of photorespiration. In C4 plants, NADP-MDH activity acts to convert oxaloacetate to malate in chloroplasts of mesophyll cells for transport to the bundle sheath cells.</text>
</comment>
<comment type="catalytic activity">
    <reaction>
        <text>(S)-malate + NADP(+) = oxaloacetate + NADPH + H(+)</text>
        <dbReference type="Rhea" id="RHEA:10824"/>
        <dbReference type="ChEBI" id="CHEBI:15378"/>
        <dbReference type="ChEBI" id="CHEBI:15589"/>
        <dbReference type="ChEBI" id="CHEBI:16452"/>
        <dbReference type="ChEBI" id="CHEBI:57783"/>
        <dbReference type="ChEBI" id="CHEBI:58349"/>
        <dbReference type="EC" id="1.1.1.82"/>
    </reaction>
</comment>
<comment type="activity regulation">
    <text>Chloroplast NADP-MDH is activated upon illumination. In order to be enzymatically active, disulfide bridges on the protein must be reduced by thioredoxin which receives electrons from ferredoxin and the electron transport system of photosynthesis.</text>
</comment>
<comment type="subunit">
    <text evidence="3">Homodimer.</text>
</comment>
<comment type="subcellular location">
    <subcellularLocation>
        <location>Plastid</location>
        <location>Chloroplast</location>
    </subcellularLocation>
</comment>
<comment type="similarity">
    <text evidence="4">Belongs to the LDH/MDH superfamily. MDH type 2 family.</text>
</comment>
<protein>
    <recommendedName>
        <fullName>Malate dehydrogenase [NADP], chloroplastic</fullName>
        <ecNumber>1.1.1.82</ecNumber>
    </recommendedName>
    <alternativeName>
        <fullName>NADP-MDH</fullName>
    </alternativeName>
</protein>
<organism>
    <name type="scientific">Flaveria bidentis</name>
    <name type="common">Coastal plain yellowtops</name>
    <name type="synonym">Ethulia bidentis</name>
    <dbReference type="NCBI Taxonomy" id="4224"/>
    <lineage>
        <taxon>Eukaryota</taxon>
        <taxon>Viridiplantae</taxon>
        <taxon>Streptophyta</taxon>
        <taxon>Embryophyta</taxon>
        <taxon>Tracheophyta</taxon>
        <taxon>Spermatophyta</taxon>
        <taxon>Magnoliopsida</taxon>
        <taxon>eudicotyledons</taxon>
        <taxon>Gunneridae</taxon>
        <taxon>Pentapetalae</taxon>
        <taxon>asterids</taxon>
        <taxon>campanulids</taxon>
        <taxon>Asterales</taxon>
        <taxon>Asteraceae</taxon>
        <taxon>Asteroideae</taxon>
        <taxon>Heliantheae alliance</taxon>
        <taxon>Tageteae</taxon>
        <taxon>Flaveria</taxon>
    </lineage>
</organism>
<sequence>MAVVKLSPWANYSSSKSEIKSSSSSSSSKSSLSAYVINVSSSPRLSFYNPYPRRLHHQRLSSPASIRCSVTSSDQIQAPLPAKQKPECFGVFCLTYDLKAEEETKSWKKIINVAVSGAAGMISNHLLFKLASGEVFGPDQPISLKLLGSERSFAALEGVAMELEDSLYPLLRQVSIGIDPYEIFQDAEWALLIGAKPRGPGMERADLLDINGQIFAEQGKALNAVASPNVKVMVVGNPCNTNALICLKNAPNIPPKNFHALTRLDENRAKCQLALKAGVFYDKVSNVTIWGNHSTTQVPDFLNAKIHGIPVTEVIRDRKWLEDEFTNMVQTRGGVLIKKWGRSSAASTAVSIVDAIRSLVTPTPEGDWFSTGVYTNGNPYGIAEDIVFSMPCRSKGDGDYEFVKDVIFDDYLSKKIKKSEDELLAEKKCVAHLTGEGIAVCDLPEDTMLPGEM</sequence>
<feature type="transit peptide" description="Chloroplast">
    <location>
        <begin position="1"/>
        <end position="68"/>
    </location>
</feature>
<feature type="chain" id="PRO_0000018642" description="Malate dehydrogenase [NADP], chloroplastic">
    <location>
        <begin position="69"/>
        <end position="453"/>
    </location>
</feature>
<feature type="active site" description="Proton acceptor" evidence="1">
    <location>
        <position position="293"/>
    </location>
</feature>
<feature type="binding site" evidence="3">
    <location>
        <begin position="117"/>
        <end position="123"/>
    </location>
    <ligand>
        <name>NADP(+)</name>
        <dbReference type="ChEBI" id="CHEBI:58349"/>
    </ligand>
</feature>
<feature type="binding site" evidence="2">
    <location>
        <position position="198"/>
    </location>
    <ligand>
        <name>substrate</name>
    </ligand>
</feature>
<feature type="binding site" evidence="2">
    <location>
        <position position="204"/>
    </location>
    <ligand>
        <name>substrate</name>
    </ligand>
</feature>
<feature type="binding site" evidence="1">
    <location>
        <position position="211"/>
    </location>
    <ligand>
        <name>NADP(+)</name>
        <dbReference type="ChEBI" id="CHEBI:58349"/>
    </ligand>
</feature>
<feature type="binding site" evidence="3">
    <location>
        <position position="218"/>
    </location>
    <ligand>
        <name>NADP(+)</name>
        <dbReference type="ChEBI" id="CHEBI:58349"/>
    </ligand>
</feature>
<feature type="binding site" evidence="3">
    <location>
        <begin position="235"/>
        <end position="237"/>
    </location>
    <ligand>
        <name>NADP(+)</name>
        <dbReference type="ChEBI" id="CHEBI:58349"/>
    </ligand>
</feature>
<feature type="binding site" evidence="2">
    <location>
        <position position="237"/>
    </location>
    <ligand>
        <name>substrate</name>
    </ligand>
</feature>
<feature type="binding site" evidence="2">
    <location>
        <position position="268"/>
    </location>
    <ligand>
        <name>substrate</name>
    </ligand>
</feature>
<feature type="site" description="Activation of NADP-MDH" evidence="1">
    <location>
        <position position="88"/>
    </location>
</feature>
<feature type="site" description="Activation of NADP-MDH" evidence="1">
    <location>
        <position position="93"/>
    </location>
</feature>
<feature type="disulfide bond" description="In oxidized inactive NAD-MDH">
    <location>
        <begin position="88"/>
        <end position="93"/>
    </location>
</feature>
<feature type="disulfide bond" description="In oxidized inactive NAD-MDH">
    <location>
        <begin position="429"/>
        <end position="441"/>
    </location>
</feature>
<feature type="turn" evidence="5">
    <location>
        <begin position="90"/>
        <end position="93"/>
    </location>
</feature>
<feature type="strand" evidence="5">
    <location>
        <begin position="101"/>
        <end position="103"/>
    </location>
</feature>
<feature type="strand" evidence="5">
    <location>
        <begin position="111"/>
        <end position="116"/>
    </location>
</feature>
<feature type="turn" evidence="5">
    <location>
        <begin position="117"/>
        <end position="119"/>
    </location>
</feature>
<feature type="helix" evidence="5">
    <location>
        <begin position="121"/>
        <end position="131"/>
    </location>
</feature>
<feature type="turn" evidence="5">
    <location>
        <begin position="132"/>
        <end position="136"/>
    </location>
</feature>
<feature type="strand" evidence="5">
    <location>
        <begin position="142"/>
        <end position="147"/>
    </location>
</feature>
<feature type="helix" evidence="5">
    <location>
        <begin position="150"/>
        <end position="152"/>
    </location>
</feature>
<feature type="helix" evidence="5">
    <location>
        <begin position="153"/>
        <end position="164"/>
    </location>
</feature>
<feature type="turn" evidence="5">
    <location>
        <begin position="165"/>
        <end position="167"/>
    </location>
</feature>
<feature type="strand" evidence="5">
    <location>
        <begin position="171"/>
        <end position="178"/>
    </location>
</feature>
<feature type="helix" evidence="5">
    <location>
        <begin position="180"/>
        <end position="183"/>
    </location>
</feature>
<feature type="turn" evidence="5">
    <location>
        <begin position="184"/>
        <end position="186"/>
    </location>
</feature>
<feature type="strand" evidence="5">
    <location>
        <begin position="188"/>
        <end position="192"/>
    </location>
</feature>
<feature type="helix" evidence="5">
    <location>
        <begin position="204"/>
        <end position="225"/>
    </location>
</feature>
<feature type="strand" evidence="5">
    <location>
        <begin position="231"/>
        <end position="234"/>
    </location>
</feature>
<feature type="strand" evidence="5">
    <location>
        <begin position="236"/>
        <end position="238"/>
    </location>
</feature>
<feature type="helix" evidence="5">
    <location>
        <begin position="239"/>
        <end position="248"/>
    </location>
</feature>
<feature type="helix" evidence="5">
    <location>
        <begin position="255"/>
        <end position="257"/>
    </location>
</feature>
<feature type="strand" evidence="5">
    <location>
        <begin position="258"/>
        <end position="260"/>
    </location>
</feature>
<feature type="helix" evidence="5">
    <location>
        <begin position="263"/>
        <end position="277"/>
    </location>
</feature>
<feature type="strand" evidence="5">
    <location>
        <begin position="283"/>
        <end position="285"/>
    </location>
</feature>
<feature type="strand" evidence="5">
    <location>
        <begin position="288"/>
        <end position="291"/>
    </location>
</feature>
<feature type="strand" evidence="5">
    <location>
        <begin position="298"/>
        <end position="300"/>
    </location>
</feature>
<feature type="helix" evidence="5">
    <location>
        <begin position="311"/>
        <end position="313"/>
    </location>
</feature>
<feature type="helix" evidence="5">
    <location>
        <begin position="318"/>
        <end position="323"/>
    </location>
</feature>
<feature type="helix" evidence="5">
    <location>
        <begin position="325"/>
        <end position="329"/>
    </location>
</feature>
<feature type="helix" evidence="5">
    <location>
        <begin position="332"/>
        <end position="338"/>
    </location>
</feature>
<feature type="helix" evidence="5">
    <location>
        <begin position="345"/>
        <end position="360"/>
    </location>
</feature>
<feature type="strand" evidence="5">
    <location>
        <begin position="369"/>
        <end position="374"/>
    </location>
</feature>
<feature type="strand" evidence="5">
    <location>
        <begin position="384"/>
        <end position="393"/>
    </location>
</feature>
<feature type="strand" evidence="5">
    <location>
        <begin position="395"/>
        <end position="398"/>
    </location>
</feature>
<feature type="helix" evidence="5">
    <location>
        <begin position="410"/>
        <end position="429"/>
    </location>
</feature>
<feature type="turn" evidence="5">
    <location>
        <begin position="430"/>
        <end position="435"/>
    </location>
</feature>
<name>MDHP_FLABI</name>
<evidence type="ECO:0000250" key="1"/>
<evidence type="ECO:0000255" key="2">
    <source>
        <dbReference type="PROSITE-ProRule" id="PRU10004"/>
    </source>
</evidence>
<evidence type="ECO:0000269" key="3">
    <source>
    </source>
</evidence>
<evidence type="ECO:0000305" key="4"/>
<evidence type="ECO:0007829" key="5">
    <source>
        <dbReference type="PDB" id="1CIV"/>
    </source>
</evidence>
<dbReference type="EC" id="1.1.1.82"/>
<dbReference type="EMBL" id="L40958">
    <property type="protein sequence ID" value="AAA63907.1"/>
    <property type="molecule type" value="mRNA"/>
</dbReference>
<dbReference type="PDB" id="1CIV">
    <property type="method" value="X-ray"/>
    <property type="resolution" value="2.80 A"/>
    <property type="chains" value="A=69-453"/>
</dbReference>
<dbReference type="PDBsum" id="1CIV"/>
<dbReference type="SMR" id="P46489"/>
<dbReference type="EvolutionaryTrace" id="P46489"/>
<dbReference type="GO" id="GO:0009507">
    <property type="term" value="C:chloroplast"/>
    <property type="evidence" value="ECO:0007669"/>
    <property type="project" value="UniProtKB-SubCell"/>
</dbReference>
<dbReference type="GO" id="GO:0046554">
    <property type="term" value="F:L-malate dehydrogenase (NADP+) activity"/>
    <property type="evidence" value="ECO:0007669"/>
    <property type="project" value="UniProtKB-EC"/>
</dbReference>
<dbReference type="GO" id="GO:0006108">
    <property type="term" value="P:malate metabolic process"/>
    <property type="evidence" value="ECO:0007669"/>
    <property type="project" value="InterPro"/>
</dbReference>
<dbReference type="CDD" id="cd01338">
    <property type="entry name" value="MDH_chloroplast-like"/>
    <property type="match status" value="1"/>
</dbReference>
<dbReference type="FunFam" id="3.90.110.10:FF:000002">
    <property type="entry name" value="Malate dehydrogenase"/>
    <property type="match status" value="1"/>
</dbReference>
<dbReference type="FunFam" id="3.40.50.720:FF:000144">
    <property type="entry name" value="Malate dehydrogenase [NADP]"/>
    <property type="match status" value="1"/>
</dbReference>
<dbReference type="Gene3D" id="3.90.110.10">
    <property type="entry name" value="Lactate dehydrogenase/glycoside hydrolase, family 4, C-terminal"/>
    <property type="match status" value="1"/>
</dbReference>
<dbReference type="Gene3D" id="3.40.50.720">
    <property type="entry name" value="NAD(P)-binding Rossmann-like Domain"/>
    <property type="match status" value="1"/>
</dbReference>
<dbReference type="InterPro" id="IPR022383">
    <property type="entry name" value="Lactate/malate_DH_C"/>
</dbReference>
<dbReference type="InterPro" id="IPR001236">
    <property type="entry name" value="Lactate/malate_DH_N"/>
</dbReference>
<dbReference type="InterPro" id="IPR015955">
    <property type="entry name" value="Lactate_DH/Glyco_Ohase_4_C"/>
</dbReference>
<dbReference type="InterPro" id="IPR001252">
    <property type="entry name" value="Malate_DH_AS"/>
</dbReference>
<dbReference type="InterPro" id="IPR011273">
    <property type="entry name" value="Malate_DH_NADP-dep_pln"/>
</dbReference>
<dbReference type="InterPro" id="IPR010945">
    <property type="entry name" value="Malate_DH_type2"/>
</dbReference>
<dbReference type="InterPro" id="IPR036291">
    <property type="entry name" value="NAD(P)-bd_dom_sf"/>
</dbReference>
<dbReference type="NCBIfam" id="TIGR01757">
    <property type="entry name" value="Malate-DH_plant"/>
    <property type="match status" value="1"/>
</dbReference>
<dbReference type="NCBIfam" id="TIGR01759">
    <property type="entry name" value="MalateDH-SF1"/>
    <property type="match status" value="1"/>
</dbReference>
<dbReference type="NCBIfam" id="NF003916">
    <property type="entry name" value="PRK05442.1"/>
    <property type="match status" value="1"/>
</dbReference>
<dbReference type="PANTHER" id="PTHR23382">
    <property type="entry name" value="MALATE DEHYDROGENASE"/>
    <property type="match status" value="1"/>
</dbReference>
<dbReference type="Pfam" id="PF02866">
    <property type="entry name" value="Ldh_1_C"/>
    <property type="match status" value="1"/>
</dbReference>
<dbReference type="Pfam" id="PF00056">
    <property type="entry name" value="Ldh_1_N"/>
    <property type="match status" value="1"/>
</dbReference>
<dbReference type="SUPFAM" id="SSF56327">
    <property type="entry name" value="LDH C-terminal domain-like"/>
    <property type="match status" value="1"/>
</dbReference>
<dbReference type="SUPFAM" id="SSF51735">
    <property type="entry name" value="NAD(P)-binding Rossmann-fold domains"/>
    <property type="match status" value="1"/>
</dbReference>
<dbReference type="PROSITE" id="PS00068">
    <property type="entry name" value="MDH"/>
    <property type="match status" value="1"/>
</dbReference>